<accession>A4J167</accession>
<protein>
    <recommendedName>
        <fullName evidence="1">N-acetyl-gamma-glutamyl-phosphate reductase</fullName>
        <shortName evidence="1">AGPR</shortName>
        <ecNumber evidence="1">1.2.1.38</ecNumber>
    </recommendedName>
    <alternativeName>
        <fullName evidence="1">N-acetyl-glutamate semialdehyde dehydrogenase</fullName>
        <shortName evidence="1">NAGSA dehydrogenase</shortName>
    </alternativeName>
</protein>
<evidence type="ECO:0000255" key="1">
    <source>
        <dbReference type="HAMAP-Rule" id="MF_00150"/>
    </source>
</evidence>
<keyword id="KW-0028">Amino-acid biosynthesis</keyword>
<keyword id="KW-0055">Arginine biosynthesis</keyword>
<keyword id="KW-0963">Cytoplasm</keyword>
<keyword id="KW-0521">NADP</keyword>
<keyword id="KW-0560">Oxidoreductase</keyword>
<keyword id="KW-1185">Reference proteome</keyword>
<feature type="chain" id="PRO_1000071515" description="N-acetyl-gamma-glutamyl-phosphate reductase">
    <location>
        <begin position="1"/>
        <end position="346"/>
    </location>
</feature>
<feature type="active site" evidence="1">
    <location>
        <position position="150"/>
    </location>
</feature>
<proteinExistence type="inferred from homology"/>
<organism>
    <name type="scientific">Desulforamulus reducens (strain ATCC BAA-1160 / DSM 100696 / MI-1)</name>
    <name type="common">Desulfotomaculum reducens</name>
    <dbReference type="NCBI Taxonomy" id="349161"/>
    <lineage>
        <taxon>Bacteria</taxon>
        <taxon>Bacillati</taxon>
        <taxon>Bacillota</taxon>
        <taxon>Clostridia</taxon>
        <taxon>Eubacteriales</taxon>
        <taxon>Peptococcaceae</taxon>
        <taxon>Desulforamulus</taxon>
    </lineage>
</organism>
<name>ARGC_DESRM</name>
<sequence length="346" mass="37801">MIKVGVVGATGYAGAELVRLLSRHPKVELTMLTSQTYAGKPMWEVFPHLYGIVDNTLEELNIPKLVANCDVIFTALPHGHAMPIAQEVMKKSKRLIDLGADFRLKDVNIYQAWYKTEHTAQLLLNNAVYGLPELYREIIKQSVIVANPGCYPTSVILGLAPLLTNEMVDTKTLIIDAKSGVSGAGRGLSLKTHFSETTNNFQAYGVATHRHTPEIEQELALLAGNPVTVSFTPHLTPMIRGILSTIYASLINNVTTEELTAIYRQFYQGERFVRVLPAGMYPTTKGVAGSNHCDISVTVDVRTKRVIVLSAIDNLIKGAAGQAVQNLNVMLGLPEDTALDFAGIYP</sequence>
<gene>
    <name evidence="1" type="primary">argC</name>
    <name type="ordered locus">Dred_0271</name>
</gene>
<dbReference type="EC" id="1.2.1.38" evidence="1"/>
<dbReference type="EMBL" id="CP000612">
    <property type="protein sequence ID" value="ABO48820.1"/>
    <property type="molecule type" value="Genomic_DNA"/>
</dbReference>
<dbReference type="RefSeq" id="WP_011876658.1">
    <property type="nucleotide sequence ID" value="NC_009253.1"/>
</dbReference>
<dbReference type="SMR" id="A4J167"/>
<dbReference type="STRING" id="349161.Dred_0271"/>
<dbReference type="KEGG" id="drm:Dred_0271"/>
<dbReference type="eggNOG" id="COG0002">
    <property type="taxonomic scope" value="Bacteria"/>
</dbReference>
<dbReference type="HOGENOM" id="CLU_006384_0_1_9"/>
<dbReference type="OrthoDB" id="9801289at2"/>
<dbReference type="UniPathway" id="UPA00068">
    <property type="reaction ID" value="UER00108"/>
</dbReference>
<dbReference type="Proteomes" id="UP000001556">
    <property type="component" value="Chromosome"/>
</dbReference>
<dbReference type="GO" id="GO:0005737">
    <property type="term" value="C:cytoplasm"/>
    <property type="evidence" value="ECO:0007669"/>
    <property type="project" value="UniProtKB-SubCell"/>
</dbReference>
<dbReference type="GO" id="GO:0003942">
    <property type="term" value="F:N-acetyl-gamma-glutamyl-phosphate reductase activity"/>
    <property type="evidence" value="ECO:0007669"/>
    <property type="project" value="UniProtKB-UniRule"/>
</dbReference>
<dbReference type="GO" id="GO:0051287">
    <property type="term" value="F:NAD binding"/>
    <property type="evidence" value="ECO:0007669"/>
    <property type="project" value="InterPro"/>
</dbReference>
<dbReference type="GO" id="GO:0070401">
    <property type="term" value="F:NADP+ binding"/>
    <property type="evidence" value="ECO:0007669"/>
    <property type="project" value="InterPro"/>
</dbReference>
<dbReference type="GO" id="GO:0006526">
    <property type="term" value="P:L-arginine biosynthetic process"/>
    <property type="evidence" value="ECO:0007669"/>
    <property type="project" value="UniProtKB-UniRule"/>
</dbReference>
<dbReference type="CDD" id="cd23934">
    <property type="entry name" value="AGPR_1_C"/>
    <property type="match status" value="1"/>
</dbReference>
<dbReference type="CDD" id="cd17895">
    <property type="entry name" value="AGPR_1_N"/>
    <property type="match status" value="1"/>
</dbReference>
<dbReference type="FunFam" id="3.30.360.10:FF:000014">
    <property type="entry name" value="N-acetyl-gamma-glutamyl-phosphate reductase"/>
    <property type="match status" value="1"/>
</dbReference>
<dbReference type="Gene3D" id="3.30.360.10">
    <property type="entry name" value="Dihydrodipicolinate Reductase, domain 2"/>
    <property type="match status" value="1"/>
</dbReference>
<dbReference type="Gene3D" id="3.40.50.720">
    <property type="entry name" value="NAD(P)-binding Rossmann-like Domain"/>
    <property type="match status" value="1"/>
</dbReference>
<dbReference type="HAMAP" id="MF_00150">
    <property type="entry name" value="ArgC_type1"/>
    <property type="match status" value="1"/>
</dbReference>
<dbReference type="InterPro" id="IPR023013">
    <property type="entry name" value="AGPR_AS"/>
</dbReference>
<dbReference type="InterPro" id="IPR000706">
    <property type="entry name" value="AGPR_type-1"/>
</dbReference>
<dbReference type="InterPro" id="IPR036291">
    <property type="entry name" value="NAD(P)-bd_dom_sf"/>
</dbReference>
<dbReference type="InterPro" id="IPR050085">
    <property type="entry name" value="NAGSA_dehydrogenase"/>
</dbReference>
<dbReference type="InterPro" id="IPR000534">
    <property type="entry name" value="Semialdehyde_DH_NAD-bd"/>
</dbReference>
<dbReference type="NCBIfam" id="TIGR01850">
    <property type="entry name" value="argC"/>
    <property type="match status" value="1"/>
</dbReference>
<dbReference type="PANTHER" id="PTHR32338:SF10">
    <property type="entry name" value="N-ACETYL-GAMMA-GLUTAMYL-PHOSPHATE REDUCTASE, CHLOROPLASTIC-RELATED"/>
    <property type="match status" value="1"/>
</dbReference>
<dbReference type="PANTHER" id="PTHR32338">
    <property type="entry name" value="N-ACETYL-GAMMA-GLUTAMYL-PHOSPHATE REDUCTASE, CHLOROPLASTIC-RELATED-RELATED"/>
    <property type="match status" value="1"/>
</dbReference>
<dbReference type="Pfam" id="PF01118">
    <property type="entry name" value="Semialdhyde_dh"/>
    <property type="match status" value="1"/>
</dbReference>
<dbReference type="Pfam" id="PF22698">
    <property type="entry name" value="Semialdhyde_dhC_1"/>
    <property type="match status" value="1"/>
</dbReference>
<dbReference type="SMART" id="SM00859">
    <property type="entry name" value="Semialdhyde_dh"/>
    <property type="match status" value="1"/>
</dbReference>
<dbReference type="SUPFAM" id="SSF55347">
    <property type="entry name" value="Glyceraldehyde-3-phosphate dehydrogenase-like, C-terminal domain"/>
    <property type="match status" value="1"/>
</dbReference>
<dbReference type="SUPFAM" id="SSF51735">
    <property type="entry name" value="NAD(P)-binding Rossmann-fold domains"/>
    <property type="match status" value="1"/>
</dbReference>
<dbReference type="PROSITE" id="PS01224">
    <property type="entry name" value="ARGC"/>
    <property type="match status" value="1"/>
</dbReference>
<comment type="function">
    <text evidence="1">Catalyzes the NADPH-dependent reduction of N-acetyl-5-glutamyl phosphate to yield N-acetyl-L-glutamate 5-semialdehyde.</text>
</comment>
<comment type="catalytic activity">
    <reaction evidence="1">
        <text>N-acetyl-L-glutamate 5-semialdehyde + phosphate + NADP(+) = N-acetyl-L-glutamyl 5-phosphate + NADPH + H(+)</text>
        <dbReference type="Rhea" id="RHEA:21588"/>
        <dbReference type="ChEBI" id="CHEBI:15378"/>
        <dbReference type="ChEBI" id="CHEBI:29123"/>
        <dbReference type="ChEBI" id="CHEBI:43474"/>
        <dbReference type="ChEBI" id="CHEBI:57783"/>
        <dbReference type="ChEBI" id="CHEBI:57936"/>
        <dbReference type="ChEBI" id="CHEBI:58349"/>
        <dbReference type="EC" id="1.2.1.38"/>
    </reaction>
</comment>
<comment type="pathway">
    <text evidence="1">Amino-acid biosynthesis; L-arginine biosynthesis; N(2)-acetyl-L-ornithine from L-glutamate: step 3/4.</text>
</comment>
<comment type="subcellular location">
    <subcellularLocation>
        <location evidence="1">Cytoplasm</location>
    </subcellularLocation>
</comment>
<comment type="similarity">
    <text evidence="1">Belongs to the NAGSA dehydrogenase family. Type 1 subfamily.</text>
</comment>
<reference key="1">
    <citation type="submission" date="2007-03" db="EMBL/GenBank/DDBJ databases">
        <title>Complete sequence of Desulfotomaculum reducens MI-1.</title>
        <authorList>
            <consortium name="US DOE Joint Genome Institute"/>
            <person name="Copeland A."/>
            <person name="Lucas S."/>
            <person name="Lapidus A."/>
            <person name="Barry K."/>
            <person name="Detter J.C."/>
            <person name="Glavina del Rio T."/>
            <person name="Hammon N."/>
            <person name="Israni S."/>
            <person name="Dalin E."/>
            <person name="Tice H."/>
            <person name="Pitluck S."/>
            <person name="Sims D."/>
            <person name="Brettin T."/>
            <person name="Bruce D."/>
            <person name="Han C."/>
            <person name="Tapia R."/>
            <person name="Schmutz J."/>
            <person name="Larimer F."/>
            <person name="Land M."/>
            <person name="Hauser L."/>
            <person name="Kyrpides N."/>
            <person name="Kim E."/>
            <person name="Tebo B.M."/>
            <person name="Richardson P."/>
        </authorList>
    </citation>
    <scope>NUCLEOTIDE SEQUENCE [LARGE SCALE GENOMIC DNA]</scope>
    <source>
        <strain>ATCC BAA-1160 / DSM 100696 / MI-1</strain>
    </source>
</reference>